<evidence type="ECO:0000255" key="1">
    <source>
        <dbReference type="HAMAP-Rule" id="MF_01085"/>
    </source>
</evidence>
<sequence length="343" mass="36727">MNERSPPRRPATFRLDDPGVVVTEADETARLGRGTIQITPEHDPATLPVPIEAVLPARRGLPWGALFWSGLAGLTLLGVGLGVVHLIEDLFARSESLGFVGLAFAFVTALALAVVIGREAYGLARLATIEKLHQRAAAVLASDDRKESRVIVQDLLKIAHQNPQLARARATLESHTGEIIDGADMIRLAERELMSPLDAEARRLVSSAAQKVSIVTAVSPRAAIDVMFVFVAALRLIRQLAYLYGGRPGALGMIRLLRHVIAHLAITGGMAASDSLVQQMLGHGIAAKLSQRLGEGVLNGLLTARLGLAAIEVTRPLPFAALPPPKLSDLATDLLRKKEDEEE</sequence>
<name>Y7254_BRADU</name>
<feature type="chain" id="PRO_0000214169" description="UPF0283 membrane protein blr7254">
    <location>
        <begin position="1"/>
        <end position="343"/>
    </location>
</feature>
<feature type="transmembrane region" description="Helical" evidence="1">
    <location>
        <begin position="64"/>
        <end position="84"/>
    </location>
</feature>
<feature type="transmembrane region" description="Helical" evidence="1">
    <location>
        <begin position="97"/>
        <end position="117"/>
    </location>
</feature>
<feature type="transmembrane region" description="Helical" evidence="1">
    <location>
        <begin position="214"/>
        <end position="234"/>
    </location>
</feature>
<dbReference type="EMBL" id="BA000040">
    <property type="protein sequence ID" value="BAC52519.1"/>
    <property type="molecule type" value="Genomic_DNA"/>
</dbReference>
<dbReference type="RefSeq" id="NP_773894.1">
    <property type="nucleotide sequence ID" value="NC_004463.1"/>
</dbReference>
<dbReference type="RefSeq" id="WP_011089989.1">
    <property type="nucleotide sequence ID" value="NC_004463.1"/>
</dbReference>
<dbReference type="FunCoup" id="Q89E33">
    <property type="interactions" value="66"/>
</dbReference>
<dbReference type="STRING" id="224911.AAV28_33930"/>
<dbReference type="EnsemblBacteria" id="BAC52519">
    <property type="protein sequence ID" value="BAC52519"/>
    <property type="gene ID" value="BAC52519"/>
</dbReference>
<dbReference type="GeneID" id="46494213"/>
<dbReference type="KEGG" id="bja:blr7254"/>
<dbReference type="PATRIC" id="fig|224911.44.peg.7324"/>
<dbReference type="eggNOG" id="COG3768">
    <property type="taxonomic scope" value="Bacteria"/>
</dbReference>
<dbReference type="HOGENOM" id="CLU_057693_1_0_5"/>
<dbReference type="InParanoid" id="Q89E33"/>
<dbReference type="OrthoDB" id="9816060at2"/>
<dbReference type="PhylomeDB" id="Q89E33"/>
<dbReference type="Proteomes" id="UP000002526">
    <property type="component" value="Chromosome"/>
</dbReference>
<dbReference type="GO" id="GO:0005886">
    <property type="term" value="C:plasma membrane"/>
    <property type="evidence" value="ECO:0000318"/>
    <property type="project" value="GO_Central"/>
</dbReference>
<dbReference type="HAMAP" id="MF_01085">
    <property type="entry name" value="UPF0283"/>
    <property type="match status" value="1"/>
</dbReference>
<dbReference type="InterPro" id="IPR021147">
    <property type="entry name" value="DUF697"/>
</dbReference>
<dbReference type="InterPro" id="IPR006507">
    <property type="entry name" value="UPF0283"/>
</dbReference>
<dbReference type="NCBIfam" id="TIGR01620">
    <property type="entry name" value="hyp_HI0043"/>
    <property type="match status" value="1"/>
</dbReference>
<dbReference type="PANTHER" id="PTHR39342">
    <property type="entry name" value="UPF0283 MEMBRANE PROTEIN YCJF"/>
    <property type="match status" value="1"/>
</dbReference>
<dbReference type="PANTHER" id="PTHR39342:SF1">
    <property type="entry name" value="UPF0283 MEMBRANE PROTEIN YCJF"/>
    <property type="match status" value="1"/>
</dbReference>
<dbReference type="Pfam" id="PF05128">
    <property type="entry name" value="DUF697"/>
    <property type="match status" value="1"/>
</dbReference>
<reference key="1">
    <citation type="journal article" date="2002" name="DNA Res.">
        <title>Complete genomic sequence of nitrogen-fixing symbiotic bacterium Bradyrhizobium japonicum USDA110.</title>
        <authorList>
            <person name="Kaneko T."/>
            <person name="Nakamura Y."/>
            <person name="Sato S."/>
            <person name="Minamisawa K."/>
            <person name="Uchiumi T."/>
            <person name="Sasamoto S."/>
            <person name="Watanabe A."/>
            <person name="Idesawa K."/>
            <person name="Iriguchi M."/>
            <person name="Kawashima K."/>
            <person name="Kohara M."/>
            <person name="Matsumoto M."/>
            <person name="Shimpo S."/>
            <person name="Tsuruoka H."/>
            <person name="Wada T."/>
            <person name="Yamada M."/>
            <person name="Tabata S."/>
        </authorList>
    </citation>
    <scope>NUCLEOTIDE SEQUENCE [LARGE SCALE GENOMIC DNA]</scope>
    <source>
        <strain>JCM 10833 / BCRC 13528 / IAM 13628 / NBRC 14792 / USDA 110</strain>
    </source>
</reference>
<keyword id="KW-0997">Cell inner membrane</keyword>
<keyword id="KW-1003">Cell membrane</keyword>
<keyword id="KW-0472">Membrane</keyword>
<keyword id="KW-1185">Reference proteome</keyword>
<keyword id="KW-0812">Transmembrane</keyword>
<keyword id="KW-1133">Transmembrane helix</keyword>
<proteinExistence type="inferred from homology"/>
<gene>
    <name type="ordered locus">blr7254</name>
</gene>
<protein>
    <recommendedName>
        <fullName evidence="1">UPF0283 membrane protein blr7254</fullName>
    </recommendedName>
</protein>
<organism>
    <name type="scientific">Bradyrhizobium diazoefficiens (strain JCM 10833 / BCRC 13528 / IAM 13628 / NBRC 14792 / USDA 110)</name>
    <dbReference type="NCBI Taxonomy" id="224911"/>
    <lineage>
        <taxon>Bacteria</taxon>
        <taxon>Pseudomonadati</taxon>
        <taxon>Pseudomonadota</taxon>
        <taxon>Alphaproteobacteria</taxon>
        <taxon>Hyphomicrobiales</taxon>
        <taxon>Nitrobacteraceae</taxon>
        <taxon>Bradyrhizobium</taxon>
    </lineage>
</organism>
<accession>Q89E33</accession>
<comment type="subcellular location">
    <subcellularLocation>
        <location evidence="1">Cell inner membrane</location>
        <topology evidence="1">Multi-pass membrane protein</topology>
    </subcellularLocation>
</comment>
<comment type="similarity">
    <text evidence="1">Belongs to the UPF0283 family.</text>
</comment>